<name>Y906_CHLMU</name>
<reference key="1">
    <citation type="journal article" date="2000" name="Nucleic Acids Res.">
        <title>Genome sequences of Chlamydia trachomatis MoPn and Chlamydia pneumoniae AR39.</title>
        <authorList>
            <person name="Read T.D."/>
            <person name="Brunham R.C."/>
            <person name="Shen C."/>
            <person name="Gill S.R."/>
            <person name="Heidelberg J.F."/>
            <person name="White O."/>
            <person name="Hickey E.K."/>
            <person name="Peterson J.D."/>
            <person name="Utterback T.R."/>
            <person name="Berry K.J."/>
            <person name="Bass S."/>
            <person name="Linher K.D."/>
            <person name="Weidman J.F."/>
            <person name="Khouri H.M."/>
            <person name="Craven B."/>
            <person name="Bowman C."/>
            <person name="Dodson R.J."/>
            <person name="Gwinn M.L."/>
            <person name="Nelson W.C."/>
            <person name="DeBoy R.T."/>
            <person name="Kolonay J.F."/>
            <person name="McClarty G."/>
            <person name="Salzberg S.L."/>
            <person name="Eisen J.A."/>
            <person name="Fraser C.M."/>
        </authorList>
    </citation>
    <scope>NUCLEOTIDE SEQUENCE [LARGE SCALE GENOMIC DNA]</scope>
    <source>
        <strain>MoPn / Nigg</strain>
    </source>
</reference>
<organism>
    <name type="scientific">Chlamydia muridarum (strain MoPn / Nigg)</name>
    <dbReference type="NCBI Taxonomy" id="243161"/>
    <lineage>
        <taxon>Bacteria</taxon>
        <taxon>Pseudomonadati</taxon>
        <taxon>Chlamydiota</taxon>
        <taxon>Chlamydiia</taxon>
        <taxon>Chlamydiales</taxon>
        <taxon>Chlamydiaceae</taxon>
        <taxon>Chlamydia/Chlamydophila group</taxon>
        <taxon>Chlamydia</taxon>
    </lineage>
</organism>
<dbReference type="EMBL" id="AE002160">
    <property type="protein sequence ID" value="AAF39699.1"/>
    <property type="molecule type" value="Genomic_DNA"/>
</dbReference>
<dbReference type="PIR" id="A81651">
    <property type="entry name" value="A81651"/>
</dbReference>
<dbReference type="SMR" id="Q9PJC5"/>
<dbReference type="KEGG" id="cmu:TC_0906"/>
<dbReference type="eggNOG" id="COG0497">
    <property type="taxonomic scope" value="Bacteria"/>
</dbReference>
<dbReference type="HOGENOM" id="CLU_058964_0_0_0"/>
<dbReference type="OrthoDB" id="18689at2"/>
<dbReference type="Proteomes" id="UP000000800">
    <property type="component" value="Chromosome"/>
</dbReference>
<dbReference type="InterPro" id="IPR009623">
    <property type="entry name" value="UPF0242_N"/>
</dbReference>
<dbReference type="InterPro" id="IPR040578">
    <property type="entry name" value="UPF0242_PAS"/>
</dbReference>
<dbReference type="Pfam" id="PF18095">
    <property type="entry name" value="PAS_12"/>
    <property type="match status" value="1"/>
</dbReference>
<dbReference type="Pfam" id="PF06785">
    <property type="entry name" value="UPF0242"/>
    <property type="match status" value="1"/>
</dbReference>
<comment type="similarity">
    <text evidence="1">Belongs to the UPF0242 family.</text>
</comment>
<gene>
    <name type="ordered locus">TC_0906</name>
</gene>
<feature type="chain" id="PRO_0000216821" description="UPF0242 protein TC_0906">
    <location>
        <begin position="1"/>
        <end position="419"/>
    </location>
</feature>
<accession>Q9PJC5</accession>
<protein>
    <recommendedName>
        <fullName>UPF0242 protein TC_0906</fullName>
    </recommendedName>
</protein>
<proteinExistence type="inferred from homology"/>
<sequence length="419" mass="48901">MTWGFLKQGIFRERSRVGKQKFYHCVSRYFHYLPPVLAILLPVGSWPFLSEQQWRYSYFLFPVVSSLGWLFAIGLRERQLRAAAGQLLETKIRKLTERDEGLKNIRETIEKRQKEANRLKLHNDKLVERLGQAREVVIQAKGRYDHMEEKSRKLHEENKQLQMQLEAAVRERNEKILENQELRQELKETLAYQQELHDEYQATFVEQHNMLDKRQAYIGNLEAKVQDLMCELRNLLQLEVGAKTELPGRPMASRDVVAQLVLEFRKIVFRVETTEAADSLTALRYTRTDPSAHNYSLACRQLFDDLREENLGMLFIYAPFAQRVLFANALFKDWTGHGLEDFLNKEGDVVLEGFAQWERDLLTESRTERSGKIVIKTKAFGATPFYYCVVTLDKGPLAEHVLGVLYPAKASFFTNLSYI</sequence>
<evidence type="ECO:0000305" key="1"/>